<keyword id="KW-0002">3D-structure</keyword>
<keyword id="KW-0175">Coiled coil</keyword>
<keyword id="KW-0539">Nucleus</keyword>
<keyword id="KW-0597">Phosphoprotein</keyword>
<keyword id="KW-1185">Reference proteome</keyword>
<keyword id="KW-0690">Ribosome biogenesis</keyword>
<reference key="1">
    <citation type="journal article" date="2002" name="Nature">
        <title>The genome sequence of Schizosaccharomyces pombe.</title>
        <authorList>
            <person name="Wood V."/>
            <person name="Gwilliam R."/>
            <person name="Rajandream M.A."/>
            <person name="Lyne M.H."/>
            <person name="Lyne R."/>
            <person name="Stewart A."/>
            <person name="Sgouros J.G."/>
            <person name="Peat N."/>
            <person name="Hayles J."/>
            <person name="Baker S.G."/>
            <person name="Basham D."/>
            <person name="Bowman S."/>
            <person name="Brooks K."/>
            <person name="Brown D."/>
            <person name="Brown S."/>
            <person name="Chillingworth T."/>
            <person name="Churcher C.M."/>
            <person name="Collins M."/>
            <person name="Connor R."/>
            <person name="Cronin A."/>
            <person name="Davis P."/>
            <person name="Feltwell T."/>
            <person name="Fraser A."/>
            <person name="Gentles S."/>
            <person name="Goble A."/>
            <person name="Hamlin N."/>
            <person name="Harris D.E."/>
            <person name="Hidalgo J."/>
            <person name="Hodgson G."/>
            <person name="Holroyd S."/>
            <person name="Hornsby T."/>
            <person name="Howarth S."/>
            <person name="Huckle E.J."/>
            <person name="Hunt S."/>
            <person name="Jagels K."/>
            <person name="James K.D."/>
            <person name="Jones L."/>
            <person name="Jones M."/>
            <person name="Leather S."/>
            <person name="McDonald S."/>
            <person name="McLean J."/>
            <person name="Mooney P."/>
            <person name="Moule S."/>
            <person name="Mungall K.L."/>
            <person name="Murphy L.D."/>
            <person name="Niblett D."/>
            <person name="Odell C."/>
            <person name="Oliver K."/>
            <person name="O'Neil S."/>
            <person name="Pearson D."/>
            <person name="Quail M.A."/>
            <person name="Rabbinowitsch E."/>
            <person name="Rutherford K.M."/>
            <person name="Rutter S."/>
            <person name="Saunders D."/>
            <person name="Seeger K."/>
            <person name="Sharp S."/>
            <person name="Skelton J."/>
            <person name="Simmonds M.N."/>
            <person name="Squares R."/>
            <person name="Squares S."/>
            <person name="Stevens K."/>
            <person name="Taylor K."/>
            <person name="Taylor R.G."/>
            <person name="Tivey A."/>
            <person name="Walsh S.V."/>
            <person name="Warren T."/>
            <person name="Whitehead S."/>
            <person name="Woodward J.R."/>
            <person name="Volckaert G."/>
            <person name="Aert R."/>
            <person name="Robben J."/>
            <person name="Grymonprez B."/>
            <person name="Weltjens I."/>
            <person name="Vanstreels E."/>
            <person name="Rieger M."/>
            <person name="Schaefer M."/>
            <person name="Mueller-Auer S."/>
            <person name="Gabel C."/>
            <person name="Fuchs M."/>
            <person name="Duesterhoeft A."/>
            <person name="Fritzc C."/>
            <person name="Holzer E."/>
            <person name="Moestl D."/>
            <person name="Hilbert H."/>
            <person name="Borzym K."/>
            <person name="Langer I."/>
            <person name="Beck A."/>
            <person name="Lehrach H."/>
            <person name="Reinhardt R."/>
            <person name="Pohl T.M."/>
            <person name="Eger P."/>
            <person name="Zimmermann W."/>
            <person name="Wedler H."/>
            <person name="Wambutt R."/>
            <person name="Purnelle B."/>
            <person name="Goffeau A."/>
            <person name="Cadieu E."/>
            <person name="Dreano S."/>
            <person name="Gloux S."/>
            <person name="Lelaure V."/>
            <person name="Mottier S."/>
            <person name="Galibert F."/>
            <person name="Aves S.J."/>
            <person name="Xiang Z."/>
            <person name="Hunt C."/>
            <person name="Moore K."/>
            <person name="Hurst S.M."/>
            <person name="Lucas M."/>
            <person name="Rochet M."/>
            <person name="Gaillardin C."/>
            <person name="Tallada V.A."/>
            <person name="Garzon A."/>
            <person name="Thode G."/>
            <person name="Daga R.R."/>
            <person name="Cruzado L."/>
            <person name="Jimenez J."/>
            <person name="Sanchez M."/>
            <person name="del Rey F."/>
            <person name="Benito J."/>
            <person name="Dominguez A."/>
            <person name="Revuelta J.L."/>
            <person name="Moreno S."/>
            <person name="Armstrong J."/>
            <person name="Forsburg S.L."/>
            <person name="Cerutti L."/>
            <person name="Lowe T."/>
            <person name="McCombie W.R."/>
            <person name="Paulsen I."/>
            <person name="Potashkin J."/>
            <person name="Shpakovski G.V."/>
            <person name="Ussery D."/>
            <person name="Barrell B.G."/>
            <person name="Nurse P."/>
        </authorList>
    </citation>
    <scope>NUCLEOTIDE SEQUENCE [LARGE SCALE GENOMIC DNA]</scope>
    <source>
        <strain>972 / ATCC 24843</strain>
    </source>
</reference>
<reference key="2">
    <citation type="journal article" date="2000" name="Genes Cells">
        <title>Large-scale screening of intracellular protein localization in living fission yeast cells by the use of a GFP-fusion genomic DNA library.</title>
        <authorList>
            <person name="Ding D.-Q."/>
            <person name="Tomita Y."/>
            <person name="Yamamoto A."/>
            <person name="Chikashige Y."/>
            <person name="Haraguchi T."/>
            <person name="Hiraoka Y."/>
        </authorList>
    </citation>
    <scope>NUCLEOTIDE SEQUENCE [LARGE SCALE GENOMIC DNA] OF 38-104</scope>
    <scope>SUBCELLULAR LOCATION</scope>
    <source>
        <strain>ATCC 38364 / 968</strain>
    </source>
</reference>
<reference key="3">
    <citation type="journal article" date="2008" name="J. Proteome Res.">
        <title>Phosphoproteome analysis of fission yeast.</title>
        <authorList>
            <person name="Wilson-Grady J.T."/>
            <person name="Villen J."/>
            <person name="Gygi S.P."/>
        </authorList>
    </citation>
    <scope>PHOSPHORYLATION [LARGE SCALE ANALYSIS] AT SER-120</scope>
    <scope>IDENTIFICATION BY MASS SPECTROMETRY</scope>
</reference>
<proteinExistence type="evidence at protein level"/>
<dbReference type="EMBL" id="CU329671">
    <property type="protein sequence ID" value="CAA21888.1"/>
    <property type="molecule type" value="Genomic_DNA"/>
</dbReference>
<dbReference type="EMBL" id="AB028010">
    <property type="protein sequence ID" value="BAA87314.1"/>
    <property type="molecule type" value="Genomic_DNA"/>
</dbReference>
<dbReference type="PIR" id="T40728">
    <property type="entry name" value="T40728"/>
</dbReference>
<dbReference type="RefSeq" id="NP_596477.1">
    <property type="nucleotide sequence ID" value="NM_001022397.2"/>
</dbReference>
<dbReference type="PDB" id="8ESQ">
    <property type="method" value="EM"/>
    <property type="resolution" value="2.80 A"/>
    <property type="chains" value="I=1-747"/>
</dbReference>
<dbReference type="PDB" id="8ESR">
    <property type="method" value="EM"/>
    <property type="resolution" value="3.20 A"/>
    <property type="chains" value="I=1-747"/>
</dbReference>
<dbReference type="PDBsum" id="8ESQ"/>
<dbReference type="PDBsum" id="8ESR"/>
<dbReference type="SMR" id="O94288"/>
<dbReference type="BioGRID" id="277744">
    <property type="interactions" value="1"/>
</dbReference>
<dbReference type="FunCoup" id="O94288">
    <property type="interactions" value="596"/>
</dbReference>
<dbReference type="STRING" id="284812.O94288"/>
<dbReference type="iPTMnet" id="O94288"/>
<dbReference type="PaxDb" id="4896-SPBC887.03c.1"/>
<dbReference type="EnsemblFungi" id="SPBC887.03c.1">
    <property type="protein sequence ID" value="SPBC887.03c.1:pep"/>
    <property type="gene ID" value="SPBC887.03c"/>
</dbReference>
<dbReference type="GeneID" id="2541230"/>
<dbReference type="KEGG" id="spo:2541230"/>
<dbReference type="PomBase" id="SPBC887.03c">
    <property type="gene designation" value="noc3"/>
</dbReference>
<dbReference type="VEuPathDB" id="FungiDB:SPBC887.03c"/>
<dbReference type="eggNOG" id="KOG2153">
    <property type="taxonomic scope" value="Eukaryota"/>
</dbReference>
<dbReference type="HOGENOM" id="CLU_012441_3_0_1"/>
<dbReference type="InParanoid" id="O94288"/>
<dbReference type="OMA" id="HYCPQVR"/>
<dbReference type="PhylomeDB" id="O94288"/>
<dbReference type="PRO" id="PR:O94288"/>
<dbReference type="Proteomes" id="UP000002485">
    <property type="component" value="Chromosome II"/>
</dbReference>
<dbReference type="GO" id="GO:0030691">
    <property type="term" value="C:Noc2p-Noc3p complex"/>
    <property type="evidence" value="ECO:0000266"/>
    <property type="project" value="PomBase"/>
</dbReference>
<dbReference type="GO" id="GO:0005730">
    <property type="term" value="C:nucleolus"/>
    <property type="evidence" value="ECO:0007005"/>
    <property type="project" value="PomBase"/>
</dbReference>
<dbReference type="GO" id="GO:0005634">
    <property type="term" value="C:nucleus"/>
    <property type="evidence" value="ECO:0007005"/>
    <property type="project" value="PomBase"/>
</dbReference>
<dbReference type="GO" id="GO:0003682">
    <property type="term" value="F:chromatin binding"/>
    <property type="evidence" value="ECO:0000318"/>
    <property type="project" value="GO_Central"/>
</dbReference>
<dbReference type="GO" id="GO:0006270">
    <property type="term" value="P:DNA replication initiation"/>
    <property type="evidence" value="ECO:0000318"/>
    <property type="project" value="GO_Central"/>
</dbReference>
<dbReference type="GO" id="GO:0006364">
    <property type="term" value="P:rRNA processing"/>
    <property type="evidence" value="ECO:0000266"/>
    <property type="project" value="PomBase"/>
</dbReference>
<dbReference type="InterPro" id="IPR005612">
    <property type="entry name" value="CCAAT-binding_factor"/>
</dbReference>
<dbReference type="InterPro" id="IPR011501">
    <property type="entry name" value="Noc3_N"/>
</dbReference>
<dbReference type="InterPro" id="IPR016903">
    <property type="entry name" value="Nucleolar_cplx-assoc_3"/>
</dbReference>
<dbReference type="PANTHER" id="PTHR14428">
    <property type="entry name" value="NUCLEOLAR COMPLEX PROTEIN 3"/>
    <property type="match status" value="1"/>
</dbReference>
<dbReference type="PANTHER" id="PTHR14428:SF5">
    <property type="entry name" value="NUCLEOLAR COMPLEX PROTEIN 3 HOMOLOG"/>
    <property type="match status" value="1"/>
</dbReference>
<dbReference type="Pfam" id="PF03914">
    <property type="entry name" value="CBF"/>
    <property type="match status" value="1"/>
</dbReference>
<dbReference type="Pfam" id="PF07540">
    <property type="entry name" value="NOC3p"/>
    <property type="match status" value="1"/>
</dbReference>
<dbReference type="PIRSF" id="PIRSF028977">
    <property type="entry name" value="Nucleolar_complex_p3"/>
    <property type="match status" value="1"/>
</dbReference>
<evidence type="ECO:0000250" key="1"/>
<evidence type="ECO:0000255" key="2"/>
<evidence type="ECO:0000256" key="3">
    <source>
        <dbReference type="SAM" id="MobiDB-lite"/>
    </source>
</evidence>
<evidence type="ECO:0000269" key="4">
    <source>
    </source>
</evidence>
<evidence type="ECO:0000269" key="5">
    <source>
    </source>
</evidence>
<evidence type="ECO:0000305" key="6"/>
<name>NOC3_SCHPO</name>
<comment type="function">
    <text evidence="1">May be required for synthesis of 60S ribosomal subunits and the transport of pre-ribosomes from the nucleoplasm to the cytoplasm.</text>
</comment>
<comment type="subcellular location">
    <subcellularLocation>
        <location evidence="4">Nucleus</location>
        <location evidence="4">Nucleolus</location>
    </subcellularLocation>
</comment>
<comment type="similarity">
    <text evidence="6">Belongs to the CBF/MAK21 family.</text>
</comment>
<feature type="chain" id="PRO_0000173482" description="Nucleolar complex-associated protein 3">
    <location>
        <begin position="1"/>
        <end position="747"/>
    </location>
</feature>
<feature type="region of interest" description="Disordered" evidence="3">
    <location>
        <begin position="1"/>
        <end position="142"/>
    </location>
</feature>
<feature type="coiled-coil region" evidence="2">
    <location>
        <begin position="214"/>
        <end position="234"/>
    </location>
</feature>
<feature type="compositionally biased region" description="Basic residues" evidence="3">
    <location>
        <begin position="1"/>
        <end position="11"/>
    </location>
</feature>
<feature type="compositionally biased region" description="Polar residues" evidence="3">
    <location>
        <begin position="74"/>
        <end position="86"/>
    </location>
</feature>
<feature type="compositionally biased region" description="Basic and acidic residues" evidence="3">
    <location>
        <begin position="89"/>
        <end position="109"/>
    </location>
</feature>
<feature type="modified residue" description="Phosphoserine" evidence="5">
    <location>
        <position position="120"/>
    </location>
</feature>
<protein>
    <recommendedName>
        <fullName>Nucleolar complex-associated protein 3</fullName>
    </recommendedName>
</protein>
<accession>O94288</accession>
<accession>Q9US68</accession>
<gene>
    <name type="primary">noc3</name>
    <name type="ORF">SPBC887.03c</name>
</gene>
<sequence length="747" mass="85100">MAARKNQKSPKPKVASSKLKNIKKSSKRNNSQSSTEPRKNATSLDSKKTTKKGVALPEIAERELTQEDIEFFNENPSSLKYLSSINPEDLGKKVEKGPRPDIYDLKKSQQFELDTSRLSSDEESVLDYSKDSEDEQDYELRPRVSSSWNNESYNRLPIKTKDGLLQNVVADVNNGEEFLSESESEASLEIDSDIKDEKQKSLEEQKIAPEIPVKQQIKNDKEALGIQAQQLLEEPVENLHLIRNIFEKFDSPYITIKKLSLLTLLAVFRDIIPGYKIRPLSEEEQGTKLSKEVAQRWEYEQTLLKHYAKFLQTLETILKSFSSTLDETQLSLYQVAVRCCTKLIEQASHFNLSEKLFALAVRQISHKTKRPGFDGIINSLKNIFEEDNLGKTSLKCVTILSRMFKQRNYDVLPDVYDLFLSVNILNDMKIKDEAWQDDTTNFKKRKKDLPYLTKKARKNYKETKKITQEMKEADAVITAQDKEKYQSEILKIIFITYFKTLQLKGKLIGNALEGVARLSHLLNIEFLGDLLQVLRELVMDDTVFLPKDKSGVQATREALLTVSTAFEIASAQGVGKLNLDLDLGLFVQRLYKIIFPFSLNPDADLNLKIKRLKDPDAPSKPFVVNATTEMEMLLKCFQVFFFKSKNISSSRLSSFSKRLAIASMQLPEHSASADLALLKKLLSRYSKLSRLLTSEEQIGDGIYNPFIEDPDLSNSSTAVLYEPFLLKNHYSPAVSQSAKELLKSTSL</sequence>
<organism>
    <name type="scientific">Schizosaccharomyces pombe (strain 972 / ATCC 24843)</name>
    <name type="common">Fission yeast</name>
    <dbReference type="NCBI Taxonomy" id="284812"/>
    <lineage>
        <taxon>Eukaryota</taxon>
        <taxon>Fungi</taxon>
        <taxon>Dikarya</taxon>
        <taxon>Ascomycota</taxon>
        <taxon>Taphrinomycotina</taxon>
        <taxon>Schizosaccharomycetes</taxon>
        <taxon>Schizosaccharomycetales</taxon>
        <taxon>Schizosaccharomycetaceae</taxon>
        <taxon>Schizosaccharomyces</taxon>
    </lineage>
</organism>